<dbReference type="EMBL" id="CP000507">
    <property type="protein sequence ID" value="ABL99166.1"/>
    <property type="molecule type" value="Genomic_DNA"/>
</dbReference>
<dbReference type="RefSeq" id="WP_011759075.1">
    <property type="nucleotide sequence ID" value="NC_008700.1"/>
</dbReference>
<dbReference type="SMR" id="A1S460"/>
<dbReference type="STRING" id="326297.Sama_0959"/>
<dbReference type="KEGG" id="saz:Sama_0959"/>
<dbReference type="eggNOG" id="COG0779">
    <property type="taxonomic scope" value="Bacteria"/>
</dbReference>
<dbReference type="HOGENOM" id="CLU_070525_1_1_6"/>
<dbReference type="OrthoDB" id="9805006at2"/>
<dbReference type="Proteomes" id="UP000009175">
    <property type="component" value="Chromosome"/>
</dbReference>
<dbReference type="GO" id="GO:0005829">
    <property type="term" value="C:cytosol"/>
    <property type="evidence" value="ECO:0007669"/>
    <property type="project" value="TreeGrafter"/>
</dbReference>
<dbReference type="GO" id="GO:0000028">
    <property type="term" value="P:ribosomal small subunit assembly"/>
    <property type="evidence" value="ECO:0007669"/>
    <property type="project" value="TreeGrafter"/>
</dbReference>
<dbReference type="GO" id="GO:0006412">
    <property type="term" value="P:translation"/>
    <property type="evidence" value="ECO:0007669"/>
    <property type="project" value="TreeGrafter"/>
</dbReference>
<dbReference type="CDD" id="cd01734">
    <property type="entry name" value="YlxS_C"/>
    <property type="match status" value="1"/>
</dbReference>
<dbReference type="FunFam" id="3.30.300.70:FF:000001">
    <property type="entry name" value="Ribosome maturation factor RimP"/>
    <property type="match status" value="1"/>
</dbReference>
<dbReference type="Gene3D" id="2.30.30.180">
    <property type="entry name" value="Ribosome maturation factor RimP, C-terminal domain"/>
    <property type="match status" value="1"/>
</dbReference>
<dbReference type="Gene3D" id="3.30.300.70">
    <property type="entry name" value="RimP-like superfamily, N-terminal"/>
    <property type="match status" value="1"/>
</dbReference>
<dbReference type="HAMAP" id="MF_01077">
    <property type="entry name" value="RimP"/>
    <property type="match status" value="1"/>
</dbReference>
<dbReference type="InterPro" id="IPR003728">
    <property type="entry name" value="Ribosome_maturation_RimP"/>
</dbReference>
<dbReference type="InterPro" id="IPR028998">
    <property type="entry name" value="RimP_C"/>
</dbReference>
<dbReference type="InterPro" id="IPR036847">
    <property type="entry name" value="RimP_C_sf"/>
</dbReference>
<dbReference type="InterPro" id="IPR028989">
    <property type="entry name" value="RimP_N"/>
</dbReference>
<dbReference type="InterPro" id="IPR035956">
    <property type="entry name" value="RimP_N_sf"/>
</dbReference>
<dbReference type="NCBIfam" id="NF000927">
    <property type="entry name" value="PRK00092.1-1"/>
    <property type="match status" value="1"/>
</dbReference>
<dbReference type="PANTHER" id="PTHR33867">
    <property type="entry name" value="RIBOSOME MATURATION FACTOR RIMP"/>
    <property type="match status" value="1"/>
</dbReference>
<dbReference type="PANTHER" id="PTHR33867:SF1">
    <property type="entry name" value="RIBOSOME MATURATION FACTOR RIMP"/>
    <property type="match status" value="1"/>
</dbReference>
<dbReference type="Pfam" id="PF17384">
    <property type="entry name" value="DUF150_C"/>
    <property type="match status" value="1"/>
</dbReference>
<dbReference type="Pfam" id="PF02576">
    <property type="entry name" value="RimP_N"/>
    <property type="match status" value="1"/>
</dbReference>
<dbReference type="SUPFAM" id="SSF74942">
    <property type="entry name" value="YhbC-like, C-terminal domain"/>
    <property type="match status" value="1"/>
</dbReference>
<dbReference type="SUPFAM" id="SSF75420">
    <property type="entry name" value="YhbC-like, N-terminal domain"/>
    <property type="match status" value="1"/>
</dbReference>
<protein>
    <recommendedName>
        <fullName evidence="1">Ribosome maturation factor RimP</fullName>
    </recommendedName>
</protein>
<proteinExistence type="inferred from homology"/>
<sequence>MATLETRLAEMLTPAVEAAGYVVWGIEYVQAGKHSILRVYIDSEQGISVDDCADASRQISAILDVEDPISNEYTLEVSSPGLDRPLFNAAQYARYVGEDVKVQLTMPVEGSRNLKGVIDKVEGQMLTIKVDGKTLVVALDNIRKGNIIAKF</sequence>
<keyword id="KW-0963">Cytoplasm</keyword>
<keyword id="KW-1185">Reference proteome</keyword>
<keyword id="KW-0690">Ribosome biogenesis</keyword>
<accession>A1S460</accession>
<organism>
    <name type="scientific">Shewanella amazonensis (strain ATCC BAA-1098 / SB2B)</name>
    <dbReference type="NCBI Taxonomy" id="326297"/>
    <lineage>
        <taxon>Bacteria</taxon>
        <taxon>Pseudomonadati</taxon>
        <taxon>Pseudomonadota</taxon>
        <taxon>Gammaproteobacteria</taxon>
        <taxon>Alteromonadales</taxon>
        <taxon>Shewanellaceae</taxon>
        <taxon>Shewanella</taxon>
    </lineage>
</organism>
<name>RIMP_SHEAM</name>
<gene>
    <name evidence="1" type="primary">rimP</name>
    <name type="ordered locus">Sama_0959</name>
</gene>
<evidence type="ECO:0000255" key="1">
    <source>
        <dbReference type="HAMAP-Rule" id="MF_01077"/>
    </source>
</evidence>
<feature type="chain" id="PRO_1000064766" description="Ribosome maturation factor RimP">
    <location>
        <begin position="1"/>
        <end position="151"/>
    </location>
</feature>
<comment type="function">
    <text evidence="1">Required for maturation of 30S ribosomal subunits.</text>
</comment>
<comment type="subcellular location">
    <subcellularLocation>
        <location evidence="1">Cytoplasm</location>
    </subcellularLocation>
</comment>
<comment type="similarity">
    <text evidence="1">Belongs to the RimP family.</text>
</comment>
<reference key="1">
    <citation type="submission" date="2006-12" db="EMBL/GenBank/DDBJ databases">
        <title>Complete sequence of Shewanella amazonensis SB2B.</title>
        <authorList>
            <consortium name="US DOE Joint Genome Institute"/>
            <person name="Copeland A."/>
            <person name="Lucas S."/>
            <person name="Lapidus A."/>
            <person name="Barry K."/>
            <person name="Detter J.C."/>
            <person name="Glavina del Rio T."/>
            <person name="Hammon N."/>
            <person name="Israni S."/>
            <person name="Dalin E."/>
            <person name="Tice H."/>
            <person name="Pitluck S."/>
            <person name="Munk A.C."/>
            <person name="Brettin T."/>
            <person name="Bruce D."/>
            <person name="Han C."/>
            <person name="Tapia R."/>
            <person name="Gilna P."/>
            <person name="Schmutz J."/>
            <person name="Larimer F."/>
            <person name="Land M."/>
            <person name="Hauser L."/>
            <person name="Kyrpides N."/>
            <person name="Mikhailova N."/>
            <person name="Fredrickson J."/>
            <person name="Richardson P."/>
        </authorList>
    </citation>
    <scope>NUCLEOTIDE SEQUENCE [LARGE SCALE GENOMIC DNA]</scope>
    <source>
        <strain>ATCC BAA-1098 / SB2B</strain>
    </source>
</reference>